<feature type="chain" id="PRO_1000045446" description="High frequency lysogenization protein HflD homolog">
    <location>
        <begin position="1"/>
        <end position="213"/>
    </location>
</feature>
<feature type="coiled-coil region" evidence="1">
    <location>
        <begin position="79"/>
        <end position="126"/>
    </location>
</feature>
<reference key="1">
    <citation type="journal article" date="2005" name="Nucleic Acids Res.">
        <title>Genome dynamics and diversity of Shigella species, the etiologic agents of bacillary dysentery.</title>
        <authorList>
            <person name="Yang F."/>
            <person name="Yang J."/>
            <person name="Zhang X."/>
            <person name="Chen L."/>
            <person name="Jiang Y."/>
            <person name="Yan Y."/>
            <person name="Tang X."/>
            <person name="Wang J."/>
            <person name="Xiong Z."/>
            <person name="Dong J."/>
            <person name="Xue Y."/>
            <person name="Zhu Y."/>
            <person name="Xu X."/>
            <person name="Sun L."/>
            <person name="Chen S."/>
            <person name="Nie H."/>
            <person name="Peng J."/>
            <person name="Xu J."/>
            <person name="Wang Y."/>
            <person name="Yuan Z."/>
            <person name="Wen Y."/>
            <person name="Yao Z."/>
            <person name="Shen Y."/>
            <person name="Qiang B."/>
            <person name="Hou Y."/>
            <person name="Yu J."/>
            <person name="Jin Q."/>
        </authorList>
    </citation>
    <scope>NUCLEOTIDE SEQUENCE [LARGE SCALE GENOMIC DNA]</scope>
    <source>
        <strain>Sb227</strain>
    </source>
</reference>
<keyword id="KW-0997">Cell inner membrane</keyword>
<keyword id="KW-1003">Cell membrane</keyword>
<keyword id="KW-0175">Coiled coil</keyword>
<keyword id="KW-0963">Cytoplasm</keyword>
<keyword id="KW-0472">Membrane</keyword>
<protein>
    <recommendedName>
        <fullName evidence="1">High frequency lysogenization protein HflD homolog</fullName>
    </recommendedName>
</protein>
<proteinExistence type="inferred from homology"/>
<gene>
    <name evidence="1" type="primary">hflD</name>
    <name type="ordered locus">SBO_1907</name>
</gene>
<accession>Q31ZK8</accession>
<evidence type="ECO:0000255" key="1">
    <source>
        <dbReference type="HAMAP-Rule" id="MF_00695"/>
    </source>
</evidence>
<dbReference type="EMBL" id="CP000036">
    <property type="protein sequence ID" value="ABB66500.1"/>
    <property type="molecule type" value="Genomic_DNA"/>
</dbReference>
<dbReference type="RefSeq" id="WP_004984576.1">
    <property type="nucleotide sequence ID" value="NC_007613.1"/>
</dbReference>
<dbReference type="SMR" id="Q31ZK8"/>
<dbReference type="KEGG" id="sbo:SBO_1907"/>
<dbReference type="HOGENOM" id="CLU_098920_0_0_6"/>
<dbReference type="Proteomes" id="UP000007067">
    <property type="component" value="Chromosome"/>
</dbReference>
<dbReference type="GO" id="GO:0005737">
    <property type="term" value="C:cytoplasm"/>
    <property type="evidence" value="ECO:0007669"/>
    <property type="project" value="UniProtKB-SubCell"/>
</dbReference>
<dbReference type="GO" id="GO:0005886">
    <property type="term" value="C:plasma membrane"/>
    <property type="evidence" value="ECO:0007669"/>
    <property type="project" value="UniProtKB-SubCell"/>
</dbReference>
<dbReference type="FunFam" id="1.10.3890.10:FF:000001">
    <property type="entry name" value="High frequency lysogenization protein HflD homolog"/>
    <property type="match status" value="1"/>
</dbReference>
<dbReference type="Gene3D" id="1.10.3890.10">
    <property type="entry name" value="HflD-like"/>
    <property type="match status" value="1"/>
</dbReference>
<dbReference type="HAMAP" id="MF_00695">
    <property type="entry name" value="HflD_protein"/>
    <property type="match status" value="1"/>
</dbReference>
<dbReference type="InterPro" id="IPR007451">
    <property type="entry name" value="HflD"/>
</dbReference>
<dbReference type="InterPro" id="IPR035932">
    <property type="entry name" value="HflD-like_sf"/>
</dbReference>
<dbReference type="NCBIfam" id="NF001245">
    <property type="entry name" value="PRK00218.1-1"/>
    <property type="match status" value="1"/>
</dbReference>
<dbReference type="NCBIfam" id="NF001246">
    <property type="entry name" value="PRK00218.1-2"/>
    <property type="match status" value="1"/>
</dbReference>
<dbReference type="NCBIfam" id="NF001248">
    <property type="entry name" value="PRK00218.1-4"/>
    <property type="match status" value="1"/>
</dbReference>
<dbReference type="NCBIfam" id="NF001249">
    <property type="entry name" value="PRK00218.1-5"/>
    <property type="match status" value="1"/>
</dbReference>
<dbReference type="PANTHER" id="PTHR38100">
    <property type="entry name" value="HIGH FREQUENCY LYSOGENIZATION PROTEIN HFLD"/>
    <property type="match status" value="1"/>
</dbReference>
<dbReference type="PANTHER" id="PTHR38100:SF1">
    <property type="entry name" value="HIGH FREQUENCY LYSOGENIZATION PROTEIN HFLD"/>
    <property type="match status" value="1"/>
</dbReference>
<dbReference type="Pfam" id="PF04356">
    <property type="entry name" value="DUF489"/>
    <property type="match status" value="1"/>
</dbReference>
<dbReference type="SUPFAM" id="SSF101322">
    <property type="entry name" value="YcfC-like"/>
    <property type="match status" value="1"/>
</dbReference>
<comment type="subcellular location">
    <subcellularLocation>
        <location>Cytoplasm</location>
    </subcellularLocation>
    <subcellularLocation>
        <location evidence="1">Cell inner membrane</location>
        <topology evidence="1">Peripheral membrane protein</topology>
        <orientation evidence="1">Cytoplasmic side</orientation>
    </subcellularLocation>
</comment>
<comment type="similarity">
    <text evidence="1">Belongs to the HflD family.</text>
</comment>
<sequence length="213" mass="22917">MAKNYYDITLALAGICQSARLVQQLAHQGHCDADALHVSLNSIIDMNPSSTLAVFGGSEANLRVGLETLLGVLNASSRQGLNAELTRYTLSLMVLERKLSSAKGALDTLGNRINGLQRQLEHFDLQSETLMSAMAAIYVDVISPLGPRIQVTGSPAVLQSPQVPAKVRATLLAGIRAAVLWHQVGGGRLQLMFSRNRLTTQAKQILAHLTPEL</sequence>
<organism>
    <name type="scientific">Shigella boydii serotype 4 (strain Sb227)</name>
    <dbReference type="NCBI Taxonomy" id="300268"/>
    <lineage>
        <taxon>Bacteria</taxon>
        <taxon>Pseudomonadati</taxon>
        <taxon>Pseudomonadota</taxon>
        <taxon>Gammaproteobacteria</taxon>
        <taxon>Enterobacterales</taxon>
        <taxon>Enterobacteriaceae</taxon>
        <taxon>Shigella</taxon>
    </lineage>
</organism>
<name>HFLD_SHIBS</name>